<reference key="1">
    <citation type="submission" date="2004-11" db="EMBL/GenBank/DDBJ databases">
        <authorList>
            <consortium name="The German cDNA consortium"/>
        </authorList>
    </citation>
    <scope>NUCLEOTIDE SEQUENCE [LARGE SCALE MRNA]</scope>
    <source>
        <tissue>Kidney</tissue>
    </source>
</reference>
<dbReference type="EC" id="2.7.1.17"/>
<dbReference type="EMBL" id="CR859925">
    <property type="protein sequence ID" value="CAH92080.1"/>
    <property type="molecule type" value="mRNA"/>
</dbReference>
<dbReference type="RefSeq" id="NP_001126213.1">
    <property type="nucleotide sequence ID" value="NM_001132741.1"/>
</dbReference>
<dbReference type="SMR" id="Q5R830"/>
<dbReference type="FunCoup" id="Q5R830">
    <property type="interactions" value="826"/>
</dbReference>
<dbReference type="STRING" id="9601.ENSPPYP00000015667"/>
<dbReference type="GeneID" id="100173181"/>
<dbReference type="KEGG" id="pon:100173181"/>
<dbReference type="CTD" id="9942"/>
<dbReference type="eggNOG" id="KOG2531">
    <property type="taxonomic scope" value="Eukaryota"/>
</dbReference>
<dbReference type="InParanoid" id="Q5R830"/>
<dbReference type="OrthoDB" id="1728974at2759"/>
<dbReference type="Proteomes" id="UP000001595">
    <property type="component" value="Unplaced"/>
</dbReference>
<dbReference type="GO" id="GO:0005829">
    <property type="term" value="C:cytosol"/>
    <property type="evidence" value="ECO:0007669"/>
    <property type="project" value="TreeGrafter"/>
</dbReference>
<dbReference type="GO" id="GO:0005524">
    <property type="term" value="F:ATP binding"/>
    <property type="evidence" value="ECO:0007669"/>
    <property type="project" value="UniProtKB-KW"/>
</dbReference>
<dbReference type="GO" id="GO:0004856">
    <property type="term" value="F:D-xylulokinase activity"/>
    <property type="evidence" value="ECO:0000250"/>
    <property type="project" value="UniProtKB"/>
</dbReference>
<dbReference type="GO" id="GO:0042732">
    <property type="term" value="P:D-xylose metabolic process"/>
    <property type="evidence" value="ECO:0007669"/>
    <property type="project" value="UniProtKB-KW"/>
</dbReference>
<dbReference type="GO" id="GO:0005997">
    <property type="term" value="P:xylulose metabolic process"/>
    <property type="evidence" value="ECO:0000250"/>
    <property type="project" value="UniProtKB"/>
</dbReference>
<dbReference type="CDD" id="cd07776">
    <property type="entry name" value="ASKHA_NBD_FGGY_SpXK-like"/>
    <property type="match status" value="1"/>
</dbReference>
<dbReference type="FunFam" id="3.30.420.40:FF:000126">
    <property type="entry name" value="Xylulose kinase"/>
    <property type="match status" value="1"/>
</dbReference>
<dbReference type="Gene3D" id="3.30.420.40">
    <property type="match status" value="2"/>
</dbReference>
<dbReference type="InterPro" id="IPR043129">
    <property type="entry name" value="ATPase_NBD"/>
</dbReference>
<dbReference type="InterPro" id="IPR000577">
    <property type="entry name" value="Carb_kinase_FGGY"/>
</dbReference>
<dbReference type="InterPro" id="IPR042024">
    <property type="entry name" value="D-XK_euk"/>
</dbReference>
<dbReference type="InterPro" id="IPR018485">
    <property type="entry name" value="FGGY_C"/>
</dbReference>
<dbReference type="InterPro" id="IPR018484">
    <property type="entry name" value="FGGY_N"/>
</dbReference>
<dbReference type="PANTHER" id="PTHR10196">
    <property type="entry name" value="SUGAR KINASE"/>
    <property type="match status" value="1"/>
</dbReference>
<dbReference type="PANTHER" id="PTHR10196:SF57">
    <property type="entry name" value="XYLULOSE KINASE"/>
    <property type="match status" value="1"/>
</dbReference>
<dbReference type="Pfam" id="PF02782">
    <property type="entry name" value="FGGY_C"/>
    <property type="match status" value="1"/>
</dbReference>
<dbReference type="Pfam" id="PF00370">
    <property type="entry name" value="FGGY_N"/>
    <property type="match status" value="1"/>
</dbReference>
<dbReference type="PIRSF" id="PIRSF000538">
    <property type="entry name" value="GlpK"/>
    <property type="match status" value="1"/>
</dbReference>
<dbReference type="SUPFAM" id="SSF53067">
    <property type="entry name" value="Actin-like ATPase domain"/>
    <property type="match status" value="2"/>
</dbReference>
<evidence type="ECO:0000250" key="1"/>
<evidence type="ECO:0000305" key="2"/>
<name>XYLB_PONAB</name>
<protein>
    <recommendedName>
        <fullName>Xylulose kinase</fullName>
        <shortName>Xylulokinase</shortName>
        <ecNumber>2.7.1.17</ecNumber>
    </recommendedName>
</protein>
<organism>
    <name type="scientific">Pongo abelii</name>
    <name type="common">Sumatran orangutan</name>
    <name type="synonym">Pongo pygmaeus abelii</name>
    <dbReference type="NCBI Taxonomy" id="9601"/>
    <lineage>
        <taxon>Eukaryota</taxon>
        <taxon>Metazoa</taxon>
        <taxon>Chordata</taxon>
        <taxon>Craniata</taxon>
        <taxon>Vertebrata</taxon>
        <taxon>Euteleostomi</taxon>
        <taxon>Mammalia</taxon>
        <taxon>Eutheria</taxon>
        <taxon>Euarchontoglires</taxon>
        <taxon>Primates</taxon>
        <taxon>Haplorrhini</taxon>
        <taxon>Catarrhini</taxon>
        <taxon>Hominidae</taxon>
        <taxon>Pongo</taxon>
    </lineage>
</organism>
<keyword id="KW-0067">ATP-binding</keyword>
<keyword id="KW-0119">Carbohydrate metabolism</keyword>
<keyword id="KW-0418">Kinase</keyword>
<keyword id="KW-0547">Nucleotide-binding</keyword>
<keyword id="KW-1185">Reference proteome</keyword>
<keyword id="KW-0808">Transferase</keyword>
<keyword id="KW-0859">Xylose metabolism</keyword>
<feature type="chain" id="PRO_0000230987" description="Xylulose kinase">
    <location>
        <begin position="1"/>
        <end position="580"/>
    </location>
</feature>
<feature type="binding site" evidence="1">
    <location>
        <position position="99"/>
    </location>
    <ligand>
        <name>substrate</name>
    </ligand>
</feature>
<feature type="binding site" evidence="1">
    <location>
        <position position="170"/>
    </location>
    <ligand>
        <name>substrate</name>
    </ligand>
</feature>
<feature type="binding site" evidence="1">
    <location>
        <position position="280"/>
    </location>
    <ligand>
        <name>substrate</name>
    </ligand>
</feature>
<feature type="binding site" evidence="1">
    <location>
        <position position="281"/>
    </location>
    <ligand>
        <name>substrate</name>
    </ligand>
</feature>
<feature type="binding site" evidence="1">
    <location>
        <position position="355"/>
    </location>
    <ligand>
        <name>ATP</name>
        <dbReference type="ChEBI" id="CHEBI:30616"/>
    </ligand>
</feature>
<feature type="binding site" evidence="1">
    <location>
        <begin position="441"/>
        <end position="442"/>
    </location>
    <ligand>
        <name>ATP</name>
        <dbReference type="ChEBI" id="CHEBI:30616"/>
    </ligand>
</feature>
<feature type="binding site" evidence="1">
    <location>
        <position position="445"/>
    </location>
    <ligand>
        <name>ATP</name>
        <dbReference type="ChEBI" id="CHEBI:30616"/>
    </ligand>
</feature>
<sequence>MAEHAPRRCCLGWDFSTQQVKVVAVDAELNVFYEESVHFDRDLPEFGTQGGVHVHKDGLTVTSPVLMWVQALDIILEKMKASGFDFSQVLALSGAGQQHGSIYWKAGSQQALTSLSPDLPLHQQLQDCFSISDCPVWMDSSSTTQCRQLEAAMGGAQALSCLTGSRAYERFTGNQIAKIYQQNPEAYSHTERISLVSSFAASLFLGSYSPIDYSDGSGMNLLQIQDKVWSQACLGACAPHLEEKLGPPVPSCSVVGAISSYYVQRYGFPPGCKVVAFTGDNPASLAGMRLEEGDIAVSLGTSDTLFLWLQEPMPALEGHIFCNPVDSQHYMALLCFKNGSLMREKIRDESASRSWSDFSKALQSTEMGNGGNLGFYFDVMEITPEIIGRHRFNTENHKVAAFPGDVEVRALIEGQFMAKRIHAEGLGYRVMSKTKILATGGASHNRDILQVLADVFGAPVYVIDTANSACVGSAYRAFHGLAGGTDVPFSEVVKLAPNPRLAATPSPGASQRRWVGVSTTKLVSASDAQHRGSNLGRRVAGAMVRKCGTMLEDTRVLLKQSSWPKPAANLDIIKTPETLS</sequence>
<comment type="function">
    <text evidence="1">Phosphorylates D-xylulose to produce D-xylulose 5-phosphate, a molecule that may play an important role in the regulation of glucose metabolism and lipogenesis.</text>
</comment>
<comment type="catalytic activity">
    <reaction>
        <text>D-xylulose + ATP = D-xylulose 5-phosphate + ADP + H(+)</text>
        <dbReference type="Rhea" id="RHEA:10964"/>
        <dbReference type="ChEBI" id="CHEBI:15378"/>
        <dbReference type="ChEBI" id="CHEBI:17140"/>
        <dbReference type="ChEBI" id="CHEBI:30616"/>
        <dbReference type="ChEBI" id="CHEBI:57737"/>
        <dbReference type="ChEBI" id="CHEBI:456216"/>
        <dbReference type="EC" id="2.7.1.17"/>
    </reaction>
</comment>
<comment type="subunit">
    <text evidence="1">Monomer.</text>
</comment>
<comment type="similarity">
    <text evidence="2">Belongs to the FGGY kinase family.</text>
</comment>
<proteinExistence type="evidence at transcript level"/>
<accession>Q5R830</accession>
<gene>
    <name type="primary">XYLB</name>
</gene>